<organism>
    <name type="scientific">Erwinia tasmaniensis (strain DSM 17950 / CFBP 7177 / CIP 109463 / NCPPB 4357 / Et1/99)</name>
    <dbReference type="NCBI Taxonomy" id="465817"/>
    <lineage>
        <taxon>Bacteria</taxon>
        <taxon>Pseudomonadati</taxon>
        <taxon>Pseudomonadota</taxon>
        <taxon>Gammaproteobacteria</taxon>
        <taxon>Enterobacterales</taxon>
        <taxon>Erwiniaceae</taxon>
        <taxon>Erwinia</taxon>
    </lineage>
</organism>
<accession>B2VD17</accession>
<keyword id="KW-0068">Autocatalytic cleavage</keyword>
<keyword id="KW-0963">Cytoplasm</keyword>
<keyword id="KW-0210">Decarboxylase</keyword>
<keyword id="KW-0456">Lyase</keyword>
<keyword id="KW-0566">Pantothenate biosynthesis</keyword>
<keyword id="KW-0670">Pyruvate</keyword>
<keyword id="KW-1185">Reference proteome</keyword>
<keyword id="KW-0704">Schiff base</keyword>
<keyword id="KW-0865">Zymogen</keyword>
<proteinExistence type="inferred from homology"/>
<dbReference type="EC" id="4.1.1.11" evidence="1"/>
<dbReference type="EMBL" id="CU468135">
    <property type="protein sequence ID" value="CAO95901.1"/>
    <property type="molecule type" value="Genomic_DNA"/>
</dbReference>
<dbReference type="RefSeq" id="WP_012440603.1">
    <property type="nucleotide sequence ID" value="NC_010694.1"/>
</dbReference>
<dbReference type="SMR" id="B2VD17"/>
<dbReference type="STRING" id="465817.ETA_08550"/>
<dbReference type="KEGG" id="eta:ETA_08550"/>
<dbReference type="eggNOG" id="COG0853">
    <property type="taxonomic scope" value="Bacteria"/>
</dbReference>
<dbReference type="HOGENOM" id="CLU_115305_2_1_6"/>
<dbReference type="OrthoDB" id="9803983at2"/>
<dbReference type="UniPathway" id="UPA00028">
    <property type="reaction ID" value="UER00002"/>
</dbReference>
<dbReference type="Proteomes" id="UP000001726">
    <property type="component" value="Chromosome"/>
</dbReference>
<dbReference type="GO" id="GO:0005829">
    <property type="term" value="C:cytosol"/>
    <property type="evidence" value="ECO:0007669"/>
    <property type="project" value="TreeGrafter"/>
</dbReference>
<dbReference type="GO" id="GO:0004068">
    <property type="term" value="F:aspartate 1-decarboxylase activity"/>
    <property type="evidence" value="ECO:0007669"/>
    <property type="project" value="UniProtKB-UniRule"/>
</dbReference>
<dbReference type="GO" id="GO:0006523">
    <property type="term" value="P:alanine biosynthetic process"/>
    <property type="evidence" value="ECO:0007669"/>
    <property type="project" value="InterPro"/>
</dbReference>
<dbReference type="GO" id="GO:0015940">
    <property type="term" value="P:pantothenate biosynthetic process"/>
    <property type="evidence" value="ECO:0007669"/>
    <property type="project" value="UniProtKB-UniRule"/>
</dbReference>
<dbReference type="CDD" id="cd06919">
    <property type="entry name" value="Asp_decarbox"/>
    <property type="match status" value="1"/>
</dbReference>
<dbReference type="FunFam" id="2.40.40.20:FF:000004">
    <property type="entry name" value="Aspartate 1-decarboxylase"/>
    <property type="match status" value="1"/>
</dbReference>
<dbReference type="Gene3D" id="2.40.40.20">
    <property type="match status" value="1"/>
</dbReference>
<dbReference type="HAMAP" id="MF_00446">
    <property type="entry name" value="PanD"/>
    <property type="match status" value="1"/>
</dbReference>
<dbReference type="InterPro" id="IPR009010">
    <property type="entry name" value="Asp_de-COase-like_dom_sf"/>
</dbReference>
<dbReference type="InterPro" id="IPR003190">
    <property type="entry name" value="Asp_decarbox"/>
</dbReference>
<dbReference type="NCBIfam" id="TIGR00223">
    <property type="entry name" value="panD"/>
    <property type="match status" value="1"/>
</dbReference>
<dbReference type="PANTHER" id="PTHR21012">
    <property type="entry name" value="ASPARTATE 1-DECARBOXYLASE"/>
    <property type="match status" value="1"/>
</dbReference>
<dbReference type="PANTHER" id="PTHR21012:SF0">
    <property type="entry name" value="ASPARTATE 1-DECARBOXYLASE"/>
    <property type="match status" value="1"/>
</dbReference>
<dbReference type="Pfam" id="PF02261">
    <property type="entry name" value="Asp_decarbox"/>
    <property type="match status" value="1"/>
</dbReference>
<dbReference type="PIRSF" id="PIRSF006246">
    <property type="entry name" value="Asp_decarbox"/>
    <property type="match status" value="1"/>
</dbReference>
<dbReference type="SUPFAM" id="SSF50692">
    <property type="entry name" value="ADC-like"/>
    <property type="match status" value="1"/>
</dbReference>
<reference key="1">
    <citation type="journal article" date="2008" name="Environ. Microbiol.">
        <title>The genome of Erwinia tasmaniensis strain Et1/99, a non-pathogenic bacterium in the genus Erwinia.</title>
        <authorList>
            <person name="Kube M."/>
            <person name="Migdoll A.M."/>
            <person name="Mueller I."/>
            <person name="Kuhl H."/>
            <person name="Beck A."/>
            <person name="Reinhardt R."/>
            <person name="Geider K."/>
        </authorList>
    </citation>
    <scope>NUCLEOTIDE SEQUENCE [LARGE SCALE GENOMIC DNA]</scope>
    <source>
        <strain>DSM 17950 / CFBP 7177 / CIP 109463 / NCPPB 4357 / Et1/99</strain>
    </source>
</reference>
<protein>
    <recommendedName>
        <fullName evidence="1">Aspartate 1-decarboxylase</fullName>
        <ecNumber evidence="1">4.1.1.11</ecNumber>
    </recommendedName>
    <alternativeName>
        <fullName evidence="1">Aspartate alpha-decarboxylase</fullName>
    </alternativeName>
    <component>
        <recommendedName>
            <fullName evidence="1">Aspartate 1-decarboxylase beta chain</fullName>
        </recommendedName>
    </component>
    <component>
        <recommendedName>
            <fullName evidence="1">Aspartate 1-decarboxylase alpha chain</fullName>
        </recommendedName>
    </component>
</protein>
<evidence type="ECO:0000255" key="1">
    <source>
        <dbReference type="HAMAP-Rule" id="MF_00446"/>
    </source>
</evidence>
<feature type="chain" id="PRO_1000124817" description="Aspartate 1-decarboxylase beta chain" evidence="1">
    <location>
        <begin position="1"/>
        <end position="24"/>
    </location>
</feature>
<feature type="chain" id="PRO_1000124818" description="Aspartate 1-decarboxylase alpha chain" evidence="1">
    <location>
        <begin position="25"/>
        <end position="126"/>
    </location>
</feature>
<feature type="active site" description="Schiff-base intermediate with substrate; via pyruvic acid" evidence="1">
    <location>
        <position position="25"/>
    </location>
</feature>
<feature type="active site" description="Proton donor" evidence="1">
    <location>
        <position position="58"/>
    </location>
</feature>
<feature type="binding site" evidence="1">
    <location>
        <position position="57"/>
    </location>
    <ligand>
        <name>substrate</name>
    </ligand>
</feature>
<feature type="binding site" evidence="1">
    <location>
        <begin position="73"/>
        <end position="75"/>
    </location>
    <ligand>
        <name>substrate</name>
    </ligand>
</feature>
<feature type="modified residue" description="Pyruvic acid (Ser)" evidence="1">
    <location>
        <position position="25"/>
    </location>
</feature>
<name>PAND_ERWT9</name>
<sequence>MNRTMLQGKLHRVKVTQADLNYEGSCAIDQDFLDASGILQYEAVDIYNVNNGQRFSTYAIAAERGSKIISVNGAAARCACEGDLLIICSYVQMSDEQAREWQPKVAYFEGDNQMKRVAKAVPVQVA</sequence>
<gene>
    <name evidence="1" type="primary">panD</name>
    <name type="ordered locus">ETA_08550</name>
</gene>
<comment type="function">
    <text evidence="1">Catalyzes the pyruvoyl-dependent decarboxylation of aspartate to produce beta-alanine.</text>
</comment>
<comment type="catalytic activity">
    <reaction evidence="1">
        <text>L-aspartate + H(+) = beta-alanine + CO2</text>
        <dbReference type="Rhea" id="RHEA:19497"/>
        <dbReference type="ChEBI" id="CHEBI:15378"/>
        <dbReference type="ChEBI" id="CHEBI:16526"/>
        <dbReference type="ChEBI" id="CHEBI:29991"/>
        <dbReference type="ChEBI" id="CHEBI:57966"/>
        <dbReference type="EC" id="4.1.1.11"/>
    </reaction>
</comment>
<comment type="cofactor">
    <cofactor evidence="1">
        <name>pyruvate</name>
        <dbReference type="ChEBI" id="CHEBI:15361"/>
    </cofactor>
    <text evidence="1">Binds 1 pyruvoyl group covalently per subunit.</text>
</comment>
<comment type="pathway">
    <text evidence="1">Cofactor biosynthesis; (R)-pantothenate biosynthesis; beta-alanine from L-aspartate: step 1/1.</text>
</comment>
<comment type="subunit">
    <text evidence="1">Heterooctamer of four alpha and four beta subunits.</text>
</comment>
<comment type="subcellular location">
    <subcellularLocation>
        <location evidence="1">Cytoplasm</location>
    </subcellularLocation>
</comment>
<comment type="PTM">
    <text evidence="1">Is synthesized initially as an inactive proenzyme, which is activated by self-cleavage at a specific serine bond to produce a beta-subunit with a hydroxyl group at its C-terminus and an alpha-subunit with a pyruvoyl group at its N-terminus.</text>
</comment>
<comment type="similarity">
    <text evidence="1">Belongs to the PanD family.</text>
</comment>